<proteinExistence type="inferred from homology"/>
<gene>
    <name evidence="1" type="primary">nuoA</name>
    <name type="ordered locus">Aave_1263</name>
</gene>
<accession>A1TLL6</accession>
<name>NUOA_PARC0</name>
<reference key="1">
    <citation type="submission" date="2006-12" db="EMBL/GenBank/DDBJ databases">
        <title>Complete sequence of Acidovorax avenae subsp. citrulli AAC00-1.</title>
        <authorList>
            <person name="Copeland A."/>
            <person name="Lucas S."/>
            <person name="Lapidus A."/>
            <person name="Barry K."/>
            <person name="Detter J.C."/>
            <person name="Glavina del Rio T."/>
            <person name="Dalin E."/>
            <person name="Tice H."/>
            <person name="Pitluck S."/>
            <person name="Kiss H."/>
            <person name="Brettin T."/>
            <person name="Bruce D."/>
            <person name="Han C."/>
            <person name="Tapia R."/>
            <person name="Gilna P."/>
            <person name="Schmutz J."/>
            <person name="Larimer F."/>
            <person name="Land M."/>
            <person name="Hauser L."/>
            <person name="Kyrpides N."/>
            <person name="Kim E."/>
            <person name="Stahl D."/>
            <person name="Richardson P."/>
        </authorList>
    </citation>
    <scope>NUCLEOTIDE SEQUENCE [LARGE SCALE GENOMIC DNA]</scope>
    <source>
        <strain>AAC00-1</strain>
    </source>
</reference>
<feature type="chain" id="PRO_0000362610" description="NADH-quinone oxidoreductase subunit A">
    <location>
        <begin position="1"/>
        <end position="119"/>
    </location>
</feature>
<feature type="transmembrane region" description="Helical" evidence="1">
    <location>
        <begin position="9"/>
        <end position="29"/>
    </location>
</feature>
<feature type="transmembrane region" description="Helical" evidence="1">
    <location>
        <begin position="63"/>
        <end position="83"/>
    </location>
</feature>
<feature type="transmembrane region" description="Helical" evidence="1">
    <location>
        <begin position="88"/>
        <end position="108"/>
    </location>
</feature>
<keyword id="KW-0997">Cell inner membrane</keyword>
<keyword id="KW-1003">Cell membrane</keyword>
<keyword id="KW-0472">Membrane</keyword>
<keyword id="KW-0520">NAD</keyword>
<keyword id="KW-0874">Quinone</keyword>
<keyword id="KW-1278">Translocase</keyword>
<keyword id="KW-0812">Transmembrane</keyword>
<keyword id="KW-1133">Transmembrane helix</keyword>
<keyword id="KW-0813">Transport</keyword>
<keyword id="KW-0830">Ubiquinone</keyword>
<protein>
    <recommendedName>
        <fullName evidence="1">NADH-quinone oxidoreductase subunit A</fullName>
        <ecNumber evidence="1">7.1.1.-</ecNumber>
    </recommendedName>
    <alternativeName>
        <fullName evidence="1">NADH dehydrogenase I subunit A</fullName>
    </alternativeName>
    <alternativeName>
        <fullName evidence="1">NDH-1 subunit A</fullName>
    </alternativeName>
    <alternativeName>
        <fullName evidence="1">NUO1</fullName>
    </alternativeName>
</protein>
<dbReference type="EC" id="7.1.1.-" evidence="1"/>
<dbReference type="EMBL" id="CP000512">
    <property type="protein sequence ID" value="ABM31854.1"/>
    <property type="molecule type" value="Genomic_DNA"/>
</dbReference>
<dbReference type="RefSeq" id="WP_011794406.1">
    <property type="nucleotide sequence ID" value="NC_008752.1"/>
</dbReference>
<dbReference type="SMR" id="A1TLL6"/>
<dbReference type="STRING" id="397945.Aave_1263"/>
<dbReference type="KEGG" id="aav:Aave_1263"/>
<dbReference type="eggNOG" id="COG0838">
    <property type="taxonomic scope" value="Bacteria"/>
</dbReference>
<dbReference type="HOGENOM" id="CLU_119549_3_1_4"/>
<dbReference type="OrthoDB" id="9791970at2"/>
<dbReference type="Proteomes" id="UP000002596">
    <property type="component" value="Chromosome"/>
</dbReference>
<dbReference type="GO" id="GO:0030964">
    <property type="term" value="C:NADH dehydrogenase complex"/>
    <property type="evidence" value="ECO:0007669"/>
    <property type="project" value="TreeGrafter"/>
</dbReference>
<dbReference type="GO" id="GO:0005886">
    <property type="term" value="C:plasma membrane"/>
    <property type="evidence" value="ECO:0007669"/>
    <property type="project" value="UniProtKB-SubCell"/>
</dbReference>
<dbReference type="GO" id="GO:0008137">
    <property type="term" value="F:NADH dehydrogenase (ubiquinone) activity"/>
    <property type="evidence" value="ECO:0007669"/>
    <property type="project" value="InterPro"/>
</dbReference>
<dbReference type="GO" id="GO:0050136">
    <property type="term" value="F:NADH:ubiquinone reductase (non-electrogenic) activity"/>
    <property type="evidence" value="ECO:0007669"/>
    <property type="project" value="UniProtKB-UniRule"/>
</dbReference>
<dbReference type="GO" id="GO:0048038">
    <property type="term" value="F:quinone binding"/>
    <property type="evidence" value="ECO:0007669"/>
    <property type="project" value="UniProtKB-KW"/>
</dbReference>
<dbReference type="FunFam" id="1.20.58.1610:FF:000004">
    <property type="entry name" value="NADH-quinone oxidoreductase subunit A"/>
    <property type="match status" value="1"/>
</dbReference>
<dbReference type="Gene3D" id="1.20.58.1610">
    <property type="entry name" value="NADH:ubiquinone/plastoquinone oxidoreductase, chain 3"/>
    <property type="match status" value="1"/>
</dbReference>
<dbReference type="HAMAP" id="MF_01394">
    <property type="entry name" value="NDH1_NuoA"/>
    <property type="match status" value="1"/>
</dbReference>
<dbReference type="InterPro" id="IPR023043">
    <property type="entry name" value="NAD(P)H_OxRDtase_bac/plastid"/>
</dbReference>
<dbReference type="InterPro" id="IPR000440">
    <property type="entry name" value="NADH_UbQ/plastoQ_OxRdtase_su3"/>
</dbReference>
<dbReference type="InterPro" id="IPR038430">
    <property type="entry name" value="NDAH_ubi_oxred_su3_sf"/>
</dbReference>
<dbReference type="PANTHER" id="PTHR11058">
    <property type="entry name" value="NADH-UBIQUINONE OXIDOREDUCTASE CHAIN 3"/>
    <property type="match status" value="1"/>
</dbReference>
<dbReference type="PANTHER" id="PTHR11058:SF9">
    <property type="entry name" value="NADH-UBIQUINONE OXIDOREDUCTASE CHAIN 3"/>
    <property type="match status" value="1"/>
</dbReference>
<dbReference type="Pfam" id="PF00507">
    <property type="entry name" value="Oxidored_q4"/>
    <property type="match status" value="1"/>
</dbReference>
<organism>
    <name type="scientific">Paracidovorax citrulli (strain AAC00-1)</name>
    <name type="common">Acidovorax citrulli</name>
    <dbReference type="NCBI Taxonomy" id="397945"/>
    <lineage>
        <taxon>Bacteria</taxon>
        <taxon>Pseudomonadati</taxon>
        <taxon>Pseudomonadota</taxon>
        <taxon>Betaproteobacteria</taxon>
        <taxon>Burkholderiales</taxon>
        <taxon>Comamonadaceae</taxon>
        <taxon>Paracidovorax</taxon>
    </lineage>
</organism>
<evidence type="ECO:0000255" key="1">
    <source>
        <dbReference type="HAMAP-Rule" id="MF_01394"/>
    </source>
</evidence>
<sequence length="119" mass="13351">MNLDQYLPVLLFILVGIGVGVVPLVLGYVLGPNRPDAAKNSPYECGFEAFEDARMKFDVRYYLVAILFILFDLEIAFLFPWAVALHEVGMTGFVAVIVFLAILVVGFAYEWKKGALDWE</sequence>
<comment type="function">
    <text evidence="1">NDH-1 shuttles electrons from NADH, via FMN and iron-sulfur (Fe-S) centers, to quinones in the respiratory chain. The immediate electron acceptor for the enzyme in this species is believed to be ubiquinone. Couples the redox reaction to proton translocation (for every two electrons transferred, four hydrogen ions are translocated across the cytoplasmic membrane), and thus conserves the redox energy in a proton gradient.</text>
</comment>
<comment type="catalytic activity">
    <reaction evidence="1">
        <text>a quinone + NADH + 5 H(+)(in) = a quinol + NAD(+) + 4 H(+)(out)</text>
        <dbReference type="Rhea" id="RHEA:57888"/>
        <dbReference type="ChEBI" id="CHEBI:15378"/>
        <dbReference type="ChEBI" id="CHEBI:24646"/>
        <dbReference type="ChEBI" id="CHEBI:57540"/>
        <dbReference type="ChEBI" id="CHEBI:57945"/>
        <dbReference type="ChEBI" id="CHEBI:132124"/>
    </reaction>
</comment>
<comment type="subunit">
    <text evidence="1">NDH-1 is composed of 14 different subunits. Subunits NuoA, H, J, K, L, M, N constitute the membrane sector of the complex.</text>
</comment>
<comment type="subcellular location">
    <subcellularLocation>
        <location evidence="1">Cell inner membrane</location>
        <topology evidence="1">Multi-pass membrane protein</topology>
    </subcellularLocation>
</comment>
<comment type="similarity">
    <text evidence="1">Belongs to the complex I subunit 3 family.</text>
</comment>